<comment type="function">
    <text evidence="1">Catalyzes the GTP-dependent ribosomal translocation step during translation elongation. During this step, the ribosome changes from the pre-translocational (PRE) to the post-translocational (POST) state as the newly formed A-site-bound peptidyl-tRNA and P-site-bound deacylated tRNA move to the P and E sites, respectively. Catalyzes the coordinated movement of the two tRNA molecules, the mRNA and conformational changes in the ribosome (By similarity).</text>
</comment>
<comment type="subcellular location">
    <subcellularLocation>
        <location evidence="1">Cytoplasm</location>
    </subcellularLocation>
</comment>
<comment type="similarity">
    <text evidence="2">Belongs to the TRAFAC class translation factor GTPase superfamily. Classic translation factor GTPase family. EF-G/EF-2 subfamily.</text>
</comment>
<sequence>MAQKDVLTDLSRVRNFGIMAHIDAGKTTTTERILYYTGINYKIGEVHDGAATMDWMEQEQERGITITSAATTTFWKDNQLNIIDTPGHVDFTVEVERNLRVLDGAVAVFDGKEGVEPQSEQVWRQADKYDVPRICFVNKMDKIGADFYFSVRTMGERLGANAVPIQLPVGAEADFEGVVDLVEMNAKVWRGETKLGETYDTVEIPADLAEQAEEYRTKLLEVVAESDEHLLEKYLGGEELTVDEIKGAIRKLTIASEIYPVLCGSAFKNKGVQPMLDAVVDYLPSPLDVPPAIGHAPAKEDEEVVRKATTDEPFAALAFKIATHPFFGKLTYIRVYSGTVESGSQVINATKGKKERLGKLFQMHSNKENPVDRASAGHIYAVIGLKDTTTGDTLSDPNQQIVLESMTFPDPVIEVAIEPKTKSDQEKLSLSIQKLAEEDPTFKVHLDSETGQTVIGGMGELHLDILVDRMRREFKVEANVGKPQVAYKETIKRLVQNVEYTHKKQTGGSGQFAKVIINLEPFTGEEGATYEFESKVTGGRIPREYIPSVDAGAQDAMQYGVLAGYPLVNLKVTLLDGAYHEVDSSEMAFKIAGSQVLKKAAALAQPVILEPIMAVEVTTPEDYMGDVIGDLNSRRGQIQAMEERAGARVVRAHVPLSEMFGYVGDLRSKTQGRANYSMVFDSYSEVPANVSKEIIAKATGE</sequence>
<feature type="chain" id="PRO_0000091154" description="Elongation factor G">
    <location>
        <begin position="1"/>
        <end position="701"/>
    </location>
</feature>
<feature type="domain" description="tr-type G">
    <location>
        <begin position="11"/>
        <end position="287"/>
    </location>
</feature>
<feature type="binding site" evidence="1">
    <location>
        <begin position="20"/>
        <end position="27"/>
    </location>
    <ligand>
        <name>GTP</name>
        <dbReference type="ChEBI" id="CHEBI:37565"/>
    </ligand>
</feature>
<feature type="binding site" evidence="1">
    <location>
        <begin position="84"/>
        <end position="88"/>
    </location>
    <ligand>
        <name>GTP</name>
        <dbReference type="ChEBI" id="CHEBI:37565"/>
    </ligand>
</feature>
<feature type="binding site" evidence="1">
    <location>
        <begin position="138"/>
        <end position="141"/>
    </location>
    <ligand>
        <name>GTP</name>
        <dbReference type="ChEBI" id="CHEBI:37565"/>
    </ligand>
</feature>
<accession>P0A557</accession>
<accession>A0A1R3XW35</accession>
<accession>O53790</accession>
<accession>X2BFQ9</accession>
<reference key="1">
    <citation type="journal article" date="2003" name="Proc. Natl. Acad. Sci. U.S.A.">
        <title>The complete genome sequence of Mycobacterium bovis.</title>
        <authorList>
            <person name="Garnier T."/>
            <person name="Eiglmeier K."/>
            <person name="Camus J.-C."/>
            <person name="Medina N."/>
            <person name="Mansoor H."/>
            <person name="Pryor M."/>
            <person name="Duthoy S."/>
            <person name="Grondin S."/>
            <person name="Lacroix C."/>
            <person name="Monsempe C."/>
            <person name="Simon S."/>
            <person name="Harris B."/>
            <person name="Atkin R."/>
            <person name="Doggett J."/>
            <person name="Mayes R."/>
            <person name="Keating L."/>
            <person name="Wheeler P.R."/>
            <person name="Parkhill J."/>
            <person name="Barrell B.G."/>
            <person name="Cole S.T."/>
            <person name="Gordon S.V."/>
            <person name="Hewinson R.G."/>
        </authorList>
    </citation>
    <scope>NUCLEOTIDE SEQUENCE [LARGE SCALE GENOMIC DNA]</scope>
    <source>
        <strain>ATCC BAA-935 / AF2122/97</strain>
    </source>
</reference>
<reference key="2">
    <citation type="journal article" date="2017" name="Genome Announc.">
        <title>Updated reference genome sequence and annotation of Mycobacterium bovis AF2122/97.</title>
        <authorList>
            <person name="Malone K.M."/>
            <person name="Farrell D."/>
            <person name="Stuber T.P."/>
            <person name="Schubert O.T."/>
            <person name="Aebersold R."/>
            <person name="Robbe-Austerman S."/>
            <person name="Gordon S.V."/>
        </authorList>
    </citation>
    <scope>NUCLEOTIDE SEQUENCE [LARGE SCALE GENOMIC DNA]</scope>
    <scope>GENOME REANNOTATION</scope>
    <source>
        <strain>ATCC BAA-935 / AF2122/97</strain>
    </source>
</reference>
<proteinExistence type="inferred from homology"/>
<keyword id="KW-0963">Cytoplasm</keyword>
<keyword id="KW-0251">Elongation factor</keyword>
<keyword id="KW-0342">GTP-binding</keyword>
<keyword id="KW-0547">Nucleotide-binding</keyword>
<keyword id="KW-0648">Protein biosynthesis</keyword>
<keyword id="KW-1185">Reference proteome</keyword>
<dbReference type="EMBL" id="LT708304">
    <property type="protein sequence ID" value="SIT99301.1"/>
    <property type="molecule type" value="Genomic_DNA"/>
</dbReference>
<dbReference type="RefSeq" id="NP_854361.1">
    <property type="nucleotide sequence ID" value="NC_002945.3"/>
</dbReference>
<dbReference type="RefSeq" id="WP_003898554.1">
    <property type="nucleotide sequence ID" value="NC_002945.4"/>
</dbReference>
<dbReference type="SMR" id="P0A557"/>
<dbReference type="GeneID" id="45424646"/>
<dbReference type="KEGG" id="mbo:BQ2027_MB0703"/>
<dbReference type="PATRIC" id="fig|233413.5.peg.766"/>
<dbReference type="Proteomes" id="UP000001419">
    <property type="component" value="Chromosome"/>
</dbReference>
<dbReference type="GO" id="GO:0005737">
    <property type="term" value="C:cytoplasm"/>
    <property type="evidence" value="ECO:0007669"/>
    <property type="project" value="UniProtKB-SubCell"/>
</dbReference>
<dbReference type="GO" id="GO:0005525">
    <property type="term" value="F:GTP binding"/>
    <property type="evidence" value="ECO:0007669"/>
    <property type="project" value="UniProtKB-UniRule"/>
</dbReference>
<dbReference type="GO" id="GO:0003924">
    <property type="term" value="F:GTPase activity"/>
    <property type="evidence" value="ECO:0007669"/>
    <property type="project" value="InterPro"/>
</dbReference>
<dbReference type="GO" id="GO:0003746">
    <property type="term" value="F:translation elongation factor activity"/>
    <property type="evidence" value="ECO:0007669"/>
    <property type="project" value="UniProtKB-UniRule"/>
</dbReference>
<dbReference type="GO" id="GO:0032790">
    <property type="term" value="P:ribosome disassembly"/>
    <property type="evidence" value="ECO:0007669"/>
    <property type="project" value="TreeGrafter"/>
</dbReference>
<dbReference type="CDD" id="cd01886">
    <property type="entry name" value="EF-G"/>
    <property type="match status" value="1"/>
</dbReference>
<dbReference type="CDD" id="cd16262">
    <property type="entry name" value="EFG_III"/>
    <property type="match status" value="1"/>
</dbReference>
<dbReference type="CDD" id="cd01434">
    <property type="entry name" value="EFG_mtEFG1_IV"/>
    <property type="match status" value="1"/>
</dbReference>
<dbReference type="CDD" id="cd03713">
    <property type="entry name" value="EFG_mtEFG_C"/>
    <property type="match status" value="1"/>
</dbReference>
<dbReference type="CDD" id="cd04088">
    <property type="entry name" value="EFG_mtEFG_II"/>
    <property type="match status" value="1"/>
</dbReference>
<dbReference type="FunFam" id="2.40.30.10:FF:000006">
    <property type="entry name" value="Elongation factor G"/>
    <property type="match status" value="1"/>
</dbReference>
<dbReference type="FunFam" id="3.30.230.10:FF:000003">
    <property type="entry name" value="Elongation factor G"/>
    <property type="match status" value="1"/>
</dbReference>
<dbReference type="FunFam" id="3.30.70.240:FF:000001">
    <property type="entry name" value="Elongation factor G"/>
    <property type="match status" value="1"/>
</dbReference>
<dbReference type="FunFam" id="3.30.70.870:FF:000001">
    <property type="entry name" value="Elongation factor G"/>
    <property type="match status" value="1"/>
</dbReference>
<dbReference type="FunFam" id="3.40.50.300:FF:000029">
    <property type="entry name" value="Elongation factor G"/>
    <property type="match status" value="1"/>
</dbReference>
<dbReference type="Gene3D" id="3.30.230.10">
    <property type="match status" value="1"/>
</dbReference>
<dbReference type="Gene3D" id="3.30.70.240">
    <property type="match status" value="1"/>
</dbReference>
<dbReference type="Gene3D" id="3.30.70.870">
    <property type="entry name" value="Elongation Factor G (Translational Gtpase), domain 3"/>
    <property type="match status" value="1"/>
</dbReference>
<dbReference type="Gene3D" id="3.40.50.300">
    <property type="entry name" value="P-loop containing nucleotide triphosphate hydrolases"/>
    <property type="match status" value="1"/>
</dbReference>
<dbReference type="Gene3D" id="2.40.30.10">
    <property type="entry name" value="Translation factors"/>
    <property type="match status" value="1"/>
</dbReference>
<dbReference type="HAMAP" id="MF_00054_B">
    <property type="entry name" value="EF_G_EF_2_B"/>
    <property type="match status" value="1"/>
</dbReference>
<dbReference type="InterPro" id="IPR041095">
    <property type="entry name" value="EFG_II"/>
</dbReference>
<dbReference type="InterPro" id="IPR009022">
    <property type="entry name" value="EFG_III"/>
</dbReference>
<dbReference type="InterPro" id="IPR035647">
    <property type="entry name" value="EFG_III/V"/>
</dbReference>
<dbReference type="InterPro" id="IPR047872">
    <property type="entry name" value="EFG_IV"/>
</dbReference>
<dbReference type="InterPro" id="IPR035649">
    <property type="entry name" value="EFG_V"/>
</dbReference>
<dbReference type="InterPro" id="IPR000640">
    <property type="entry name" value="EFG_V-like"/>
</dbReference>
<dbReference type="InterPro" id="IPR004161">
    <property type="entry name" value="EFTu-like_2"/>
</dbReference>
<dbReference type="InterPro" id="IPR031157">
    <property type="entry name" value="G_TR_CS"/>
</dbReference>
<dbReference type="InterPro" id="IPR027417">
    <property type="entry name" value="P-loop_NTPase"/>
</dbReference>
<dbReference type="InterPro" id="IPR020568">
    <property type="entry name" value="Ribosomal_Su5_D2-typ_SF"/>
</dbReference>
<dbReference type="InterPro" id="IPR014721">
    <property type="entry name" value="Ribsml_uS5_D2-typ_fold_subgr"/>
</dbReference>
<dbReference type="InterPro" id="IPR005225">
    <property type="entry name" value="Small_GTP-bd"/>
</dbReference>
<dbReference type="InterPro" id="IPR000795">
    <property type="entry name" value="T_Tr_GTP-bd_dom"/>
</dbReference>
<dbReference type="InterPro" id="IPR009000">
    <property type="entry name" value="Transl_B-barrel_sf"/>
</dbReference>
<dbReference type="InterPro" id="IPR004540">
    <property type="entry name" value="Transl_elong_EFG/EF2"/>
</dbReference>
<dbReference type="InterPro" id="IPR005517">
    <property type="entry name" value="Transl_elong_EFG/EF2_IV"/>
</dbReference>
<dbReference type="NCBIfam" id="TIGR00484">
    <property type="entry name" value="EF-G"/>
    <property type="match status" value="1"/>
</dbReference>
<dbReference type="NCBIfam" id="NF009381">
    <property type="entry name" value="PRK12740.1-5"/>
    <property type="match status" value="1"/>
</dbReference>
<dbReference type="NCBIfam" id="TIGR00231">
    <property type="entry name" value="small_GTP"/>
    <property type="match status" value="1"/>
</dbReference>
<dbReference type="PANTHER" id="PTHR43261:SF1">
    <property type="entry name" value="RIBOSOME-RELEASING FACTOR 2, MITOCHONDRIAL"/>
    <property type="match status" value="1"/>
</dbReference>
<dbReference type="PANTHER" id="PTHR43261">
    <property type="entry name" value="TRANSLATION ELONGATION FACTOR G-RELATED"/>
    <property type="match status" value="1"/>
</dbReference>
<dbReference type="Pfam" id="PF00679">
    <property type="entry name" value="EFG_C"/>
    <property type="match status" value="1"/>
</dbReference>
<dbReference type="Pfam" id="PF14492">
    <property type="entry name" value="EFG_III"/>
    <property type="match status" value="1"/>
</dbReference>
<dbReference type="Pfam" id="PF03764">
    <property type="entry name" value="EFG_IV"/>
    <property type="match status" value="1"/>
</dbReference>
<dbReference type="Pfam" id="PF00009">
    <property type="entry name" value="GTP_EFTU"/>
    <property type="match status" value="1"/>
</dbReference>
<dbReference type="Pfam" id="PF03144">
    <property type="entry name" value="GTP_EFTU_D2"/>
    <property type="match status" value="1"/>
</dbReference>
<dbReference type="PRINTS" id="PR00315">
    <property type="entry name" value="ELONGATNFCT"/>
</dbReference>
<dbReference type="SMART" id="SM00838">
    <property type="entry name" value="EFG_C"/>
    <property type="match status" value="1"/>
</dbReference>
<dbReference type="SMART" id="SM00889">
    <property type="entry name" value="EFG_IV"/>
    <property type="match status" value="1"/>
</dbReference>
<dbReference type="SUPFAM" id="SSF54980">
    <property type="entry name" value="EF-G C-terminal domain-like"/>
    <property type="match status" value="2"/>
</dbReference>
<dbReference type="SUPFAM" id="SSF52540">
    <property type="entry name" value="P-loop containing nucleoside triphosphate hydrolases"/>
    <property type="match status" value="1"/>
</dbReference>
<dbReference type="SUPFAM" id="SSF54211">
    <property type="entry name" value="Ribosomal protein S5 domain 2-like"/>
    <property type="match status" value="1"/>
</dbReference>
<dbReference type="SUPFAM" id="SSF50447">
    <property type="entry name" value="Translation proteins"/>
    <property type="match status" value="1"/>
</dbReference>
<dbReference type="PROSITE" id="PS00301">
    <property type="entry name" value="G_TR_1"/>
    <property type="match status" value="1"/>
</dbReference>
<dbReference type="PROSITE" id="PS51722">
    <property type="entry name" value="G_TR_2"/>
    <property type="match status" value="1"/>
</dbReference>
<protein>
    <recommendedName>
        <fullName>Elongation factor G</fullName>
        <shortName>EF-G</shortName>
    </recommendedName>
</protein>
<evidence type="ECO:0000250" key="1"/>
<evidence type="ECO:0000305" key="2"/>
<name>EFG_MYCBO</name>
<organism>
    <name type="scientific">Mycobacterium bovis (strain ATCC BAA-935 / AF2122/97)</name>
    <dbReference type="NCBI Taxonomy" id="233413"/>
    <lineage>
        <taxon>Bacteria</taxon>
        <taxon>Bacillati</taxon>
        <taxon>Actinomycetota</taxon>
        <taxon>Actinomycetes</taxon>
        <taxon>Mycobacteriales</taxon>
        <taxon>Mycobacteriaceae</taxon>
        <taxon>Mycobacterium</taxon>
        <taxon>Mycobacterium tuberculosis complex</taxon>
    </lineage>
</organism>
<gene>
    <name type="primary">fusA</name>
    <name type="ordered locus">BQ2027_MB0703</name>
</gene>